<gene>
    <name type="primary">ML3</name>
    <name type="ordered locus">Os05g0102800</name>
    <name type="ordered locus">LOC_Os05g01240</name>
    <name type="ORF">OsJ_16784</name>
    <name type="ORF">P0036D10.18</name>
    <name type="ORF">P0668H12.3</name>
</gene>
<reference key="1">
    <citation type="journal article" date="2006" name="Plant Cell">
        <title>PLASTOCHRON2 regulates leaf initiation and maturation in rice.</title>
        <authorList>
            <person name="Kawakatsu T."/>
            <person name="Itoh J."/>
            <person name="Miyoshi K."/>
            <person name="Kurata N."/>
            <person name="Alvarez N."/>
            <person name="Veit B."/>
            <person name="Nagato Y."/>
        </authorList>
    </citation>
    <scope>NUCLEOTIDE SEQUENCE [MRNA]</scope>
    <source>
        <strain>cv. Nipponbare</strain>
    </source>
</reference>
<reference key="2">
    <citation type="journal article" date="2005" name="Mol. Genet. Genomics">
        <title>A fine physical map of the rice chromosome 5.</title>
        <authorList>
            <person name="Cheng C.-H."/>
            <person name="Chung M.C."/>
            <person name="Liu S.-M."/>
            <person name="Chen S.-K."/>
            <person name="Kao F.Y."/>
            <person name="Lin S.-J."/>
            <person name="Hsiao S.-H."/>
            <person name="Tseng I.C."/>
            <person name="Hsing Y.-I.C."/>
            <person name="Wu H.-P."/>
            <person name="Chen C.-S."/>
            <person name="Shaw J.-F."/>
            <person name="Wu J."/>
            <person name="Matsumoto T."/>
            <person name="Sasaki T."/>
            <person name="Chen H.-C."/>
            <person name="Chow T.-Y."/>
        </authorList>
    </citation>
    <scope>NUCLEOTIDE SEQUENCE [LARGE SCALE GENOMIC DNA]</scope>
    <source>
        <strain>cv. Nipponbare</strain>
    </source>
</reference>
<reference key="3">
    <citation type="journal article" date="2005" name="Nature">
        <title>The map-based sequence of the rice genome.</title>
        <authorList>
            <consortium name="International rice genome sequencing project (IRGSP)"/>
        </authorList>
    </citation>
    <scope>NUCLEOTIDE SEQUENCE [LARGE SCALE GENOMIC DNA]</scope>
    <source>
        <strain>cv. Nipponbare</strain>
    </source>
</reference>
<reference key="4">
    <citation type="journal article" date="2008" name="Nucleic Acids Res.">
        <title>The rice annotation project database (RAP-DB): 2008 update.</title>
        <authorList>
            <consortium name="The rice annotation project (RAP)"/>
        </authorList>
    </citation>
    <scope>GENOME REANNOTATION</scope>
    <source>
        <strain>cv. Nipponbare</strain>
    </source>
</reference>
<reference key="5">
    <citation type="journal article" date="2013" name="Rice">
        <title>Improvement of the Oryza sativa Nipponbare reference genome using next generation sequence and optical map data.</title>
        <authorList>
            <person name="Kawahara Y."/>
            <person name="de la Bastide M."/>
            <person name="Hamilton J.P."/>
            <person name="Kanamori H."/>
            <person name="McCombie W.R."/>
            <person name="Ouyang S."/>
            <person name="Schwartz D.C."/>
            <person name="Tanaka T."/>
            <person name="Wu J."/>
            <person name="Zhou S."/>
            <person name="Childs K.L."/>
            <person name="Davidson R.M."/>
            <person name="Lin H."/>
            <person name="Quesada-Ocampo L."/>
            <person name="Vaillancourt B."/>
            <person name="Sakai H."/>
            <person name="Lee S.S."/>
            <person name="Kim J."/>
            <person name="Numa H."/>
            <person name="Itoh T."/>
            <person name="Buell C.R."/>
            <person name="Matsumoto T."/>
        </authorList>
    </citation>
    <scope>GENOME REANNOTATION</scope>
    <source>
        <strain>cv. Nipponbare</strain>
    </source>
</reference>
<reference key="6">
    <citation type="journal article" date="2005" name="PLoS Biol.">
        <title>The genomes of Oryza sativa: a history of duplications.</title>
        <authorList>
            <person name="Yu J."/>
            <person name="Wang J."/>
            <person name="Lin W."/>
            <person name="Li S."/>
            <person name="Li H."/>
            <person name="Zhou J."/>
            <person name="Ni P."/>
            <person name="Dong W."/>
            <person name="Hu S."/>
            <person name="Zeng C."/>
            <person name="Zhang J."/>
            <person name="Zhang Y."/>
            <person name="Li R."/>
            <person name="Xu Z."/>
            <person name="Li S."/>
            <person name="Li X."/>
            <person name="Zheng H."/>
            <person name="Cong L."/>
            <person name="Lin L."/>
            <person name="Yin J."/>
            <person name="Geng J."/>
            <person name="Li G."/>
            <person name="Shi J."/>
            <person name="Liu J."/>
            <person name="Lv H."/>
            <person name="Li J."/>
            <person name="Wang J."/>
            <person name="Deng Y."/>
            <person name="Ran L."/>
            <person name="Shi X."/>
            <person name="Wang X."/>
            <person name="Wu Q."/>
            <person name="Li C."/>
            <person name="Ren X."/>
            <person name="Wang J."/>
            <person name="Wang X."/>
            <person name="Li D."/>
            <person name="Liu D."/>
            <person name="Zhang X."/>
            <person name="Ji Z."/>
            <person name="Zhao W."/>
            <person name="Sun Y."/>
            <person name="Zhang Z."/>
            <person name="Bao J."/>
            <person name="Han Y."/>
            <person name="Dong L."/>
            <person name="Ji J."/>
            <person name="Chen P."/>
            <person name="Wu S."/>
            <person name="Liu J."/>
            <person name="Xiao Y."/>
            <person name="Bu D."/>
            <person name="Tan J."/>
            <person name="Yang L."/>
            <person name="Ye C."/>
            <person name="Zhang J."/>
            <person name="Xu J."/>
            <person name="Zhou Y."/>
            <person name="Yu Y."/>
            <person name="Zhang B."/>
            <person name="Zhuang S."/>
            <person name="Wei H."/>
            <person name="Liu B."/>
            <person name="Lei M."/>
            <person name="Yu H."/>
            <person name="Li Y."/>
            <person name="Xu H."/>
            <person name="Wei S."/>
            <person name="He X."/>
            <person name="Fang L."/>
            <person name="Zhang Z."/>
            <person name="Zhang Y."/>
            <person name="Huang X."/>
            <person name="Su Z."/>
            <person name="Tong W."/>
            <person name="Li J."/>
            <person name="Tong Z."/>
            <person name="Li S."/>
            <person name="Ye J."/>
            <person name="Wang L."/>
            <person name="Fang L."/>
            <person name="Lei T."/>
            <person name="Chen C.-S."/>
            <person name="Chen H.-C."/>
            <person name="Xu Z."/>
            <person name="Li H."/>
            <person name="Huang H."/>
            <person name="Zhang F."/>
            <person name="Xu H."/>
            <person name="Li N."/>
            <person name="Zhao C."/>
            <person name="Li S."/>
            <person name="Dong L."/>
            <person name="Huang Y."/>
            <person name="Li L."/>
            <person name="Xi Y."/>
            <person name="Qi Q."/>
            <person name="Li W."/>
            <person name="Zhang B."/>
            <person name="Hu W."/>
            <person name="Zhang Y."/>
            <person name="Tian X."/>
            <person name="Jiao Y."/>
            <person name="Liang X."/>
            <person name="Jin J."/>
            <person name="Gao L."/>
            <person name="Zheng W."/>
            <person name="Hao B."/>
            <person name="Liu S.-M."/>
            <person name="Wang W."/>
            <person name="Yuan L."/>
            <person name="Cao M."/>
            <person name="McDermott J."/>
            <person name="Samudrala R."/>
            <person name="Wang J."/>
            <person name="Wong G.K.-S."/>
            <person name="Yang H."/>
        </authorList>
    </citation>
    <scope>NUCLEOTIDE SEQUENCE [LARGE SCALE GENOMIC DNA]</scope>
    <source>
        <strain>cv. Nipponbare</strain>
    </source>
</reference>
<reference key="7">
    <citation type="journal article" date="2003" name="Science">
        <title>Collection, mapping, and annotation of over 28,000 cDNA clones from japonica rice.</title>
        <authorList>
            <consortium name="The rice full-length cDNA consortium"/>
        </authorList>
    </citation>
    <scope>NUCLEOTIDE SEQUENCE [LARGE SCALE MRNA]</scope>
    <source>
        <strain>cv. Nipponbare</strain>
    </source>
</reference>
<reference key="8">
    <citation type="journal article" date="2004" name="Plant Mol. Biol.">
        <title>Diversification of genes encoding mei2 -like RNA binding proteins in plants.</title>
        <authorList>
            <person name="Anderson G.H."/>
            <person name="Alvarez N.D."/>
            <person name="Gilman C."/>
            <person name="Jeffares D.C."/>
            <person name="Trainor V.C."/>
            <person name="Hanson M.R."/>
            <person name="Veit B."/>
        </authorList>
    </citation>
    <scope>GENE FAMILY</scope>
</reference>
<sequence>MVIASGAIDRRHLSPFTPTSDDSSSSFFSQDLVPTERQVGFWNSESMVDHKGSKSVFASPLEKIQPNGANHAGDPETPGGQAFKGLDILSLSNLMRQENASGSPSLSWGEILTNPISRLGLSTRETAFVEPTTADQHVPGYGKGLSSSSLSEVFSGKSREIVSGVLCQSTGTHTSIYDSDEPLESMEAIEAQTIGDLLPDDDDDLISGIADGFEFTGMSTNQDDADEDIFCTGGGMELENNDSVKGDKVQDGSFKSQISSGHSINKQPSRTLVVRNITANIEDSDLTVLFQQYGDIRMLYTSFKHHGFVTVSYYDIRAAQNAMRALHSKPLGLMKLDVQFSFPKENVPGKDIDKGMLVVSNIDSSISNDDLLQMLSVYGDVKEISSSPISCTKKFVEFYDVRAAEEALHDLNKGGISGPKFKVELSQHGEAGSCLRQQHSREWKQDSLPHQPKNSSPGTIGKLGTKCQDNSTVHNLFSPVNQQLESPTQCISTTGPQILSSPIRIKSTLQHNNQASVGDLSGPLGQGNFGRGIQTLHPRSLPEHHNRICNNSKSMTVSGRNASSRQDGVDHNIQKVGPAGFCGHSFDQNNEAFGFTEIGSCPLHGYHYTWNHTNVFPQSPSAPILWSNLQHPMHVHSYPGVPPHMLNTGSYPMDQHHLGSAPDNGGSFGNVHSFHPGSLGSIGLHGSPQLYPSELSAFASSRGNFREALFSPVGGGFQSLQQMCNAINGRNPMIHVSTSYDATNDRMRSRRHDGNPAQSENKRQFELDIDRIAKGEDSRTTLMIKNIPNKYNCKLLLAVIDENHRGTYDFIYLPIDFKNKCNVGYAFINMTDPQHIIPFYKTFNGKKWEKFNSEKVASLAYARIQGRSALIAHFQNSSLMNEDKWCRPMLFHKDGPNAGDQEPFPVGNNVRSRAGRNRSLISLDTKDASPSSSPDQESNSVGTANSTCRTTLEQT</sequence>
<accession>Q75M35</accession>
<accession>A0A0P0WGV2</accession>
<comment type="function">
    <text evidence="1">Probable RNA-binding protein that may play a role in growth regulation.</text>
</comment>
<keyword id="KW-1185">Reference proteome</keyword>
<keyword id="KW-0677">Repeat</keyword>
<keyword id="KW-0694">RNA-binding</keyword>
<evidence type="ECO:0000250" key="1"/>
<evidence type="ECO:0000255" key="2">
    <source>
        <dbReference type="PROSITE-ProRule" id="PRU00176"/>
    </source>
</evidence>
<evidence type="ECO:0000256" key="3">
    <source>
        <dbReference type="SAM" id="MobiDB-lite"/>
    </source>
</evidence>
<feature type="chain" id="PRO_0000409347" description="Protein MEI2-like 3">
    <location>
        <begin position="1"/>
        <end position="955"/>
    </location>
</feature>
<feature type="domain" description="RRM 1" evidence="2">
    <location>
        <begin position="270"/>
        <end position="343"/>
    </location>
</feature>
<feature type="domain" description="RRM 2" evidence="2">
    <location>
        <begin position="355"/>
        <end position="428"/>
    </location>
</feature>
<feature type="region of interest" description="Disordered" evidence="3">
    <location>
        <begin position="64"/>
        <end position="83"/>
    </location>
</feature>
<feature type="region of interest" description="Disordered" evidence="3">
    <location>
        <begin position="436"/>
        <end position="465"/>
    </location>
</feature>
<feature type="region of interest" description="Disordered" evidence="3">
    <location>
        <begin position="897"/>
        <end position="955"/>
    </location>
</feature>
<feature type="compositionally biased region" description="Polar residues" evidence="3">
    <location>
        <begin position="935"/>
        <end position="955"/>
    </location>
</feature>
<proteinExistence type="evidence at transcript level"/>
<organism>
    <name type="scientific">Oryza sativa subsp. japonica</name>
    <name type="common">Rice</name>
    <dbReference type="NCBI Taxonomy" id="39947"/>
    <lineage>
        <taxon>Eukaryota</taxon>
        <taxon>Viridiplantae</taxon>
        <taxon>Streptophyta</taxon>
        <taxon>Embryophyta</taxon>
        <taxon>Tracheophyta</taxon>
        <taxon>Spermatophyta</taxon>
        <taxon>Magnoliopsida</taxon>
        <taxon>Liliopsida</taxon>
        <taxon>Poales</taxon>
        <taxon>Poaceae</taxon>
        <taxon>BOP clade</taxon>
        <taxon>Oryzoideae</taxon>
        <taxon>Oryzeae</taxon>
        <taxon>Oryzinae</taxon>
        <taxon>Oryza</taxon>
        <taxon>Oryza sativa</taxon>
    </lineage>
</organism>
<dbReference type="EMBL" id="AB244278">
    <property type="protein sequence ID" value="BAE79765.1"/>
    <property type="molecule type" value="mRNA"/>
</dbReference>
<dbReference type="EMBL" id="AC073405">
    <property type="protein sequence ID" value="AAW56930.1"/>
    <property type="molecule type" value="Genomic_DNA"/>
</dbReference>
<dbReference type="EMBL" id="AC084818">
    <property type="protein sequence ID" value="AAS88822.2"/>
    <property type="molecule type" value="Genomic_DNA"/>
</dbReference>
<dbReference type="EMBL" id="AP008211">
    <property type="protein sequence ID" value="BAF16302.1"/>
    <property type="molecule type" value="Genomic_DNA"/>
</dbReference>
<dbReference type="EMBL" id="AP014961">
    <property type="protein sequence ID" value="BAS91840.1"/>
    <property type="molecule type" value="Genomic_DNA"/>
</dbReference>
<dbReference type="EMBL" id="CM000142">
    <property type="protein sequence ID" value="EEE62003.1"/>
    <property type="molecule type" value="Genomic_DNA"/>
</dbReference>
<dbReference type="EMBL" id="AK120322">
    <property type="protein sequence ID" value="BAG99966.1"/>
    <property type="molecule type" value="mRNA"/>
</dbReference>
<dbReference type="EMBL" id="AK121634">
    <property type="protein sequence ID" value="BAH00583.1"/>
    <property type="molecule type" value="mRNA"/>
</dbReference>
<dbReference type="RefSeq" id="XP_015640244.1">
    <property type="nucleotide sequence ID" value="XM_015784758.1"/>
</dbReference>
<dbReference type="RefSeq" id="XP_015640245.1">
    <property type="nucleotide sequence ID" value="XM_015784759.1"/>
</dbReference>
<dbReference type="RefSeq" id="XP_015640246.1">
    <property type="nucleotide sequence ID" value="XM_015784760.1"/>
</dbReference>
<dbReference type="SMR" id="Q75M35"/>
<dbReference type="FunCoup" id="Q75M35">
    <property type="interactions" value="2"/>
</dbReference>
<dbReference type="PaxDb" id="39947-Q75M35"/>
<dbReference type="EnsemblPlants" id="Os05t0102800-01">
    <property type="protein sequence ID" value="Os05t0102800-01"/>
    <property type="gene ID" value="Os05g0102800"/>
</dbReference>
<dbReference type="EnsemblPlants" id="Os05t0102800-02">
    <property type="protein sequence ID" value="Os05t0102800-02"/>
    <property type="gene ID" value="Os05g0102800"/>
</dbReference>
<dbReference type="EnsemblPlants" id="Os05t0102800-03">
    <property type="protein sequence ID" value="Os05t0102800-03"/>
    <property type="gene ID" value="Os05g0102800"/>
</dbReference>
<dbReference type="Gramene" id="Os05t0102800-01">
    <property type="protein sequence ID" value="Os05t0102800-01"/>
    <property type="gene ID" value="Os05g0102800"/>
</dbReference>
<dbReference type="Gramene" id="Os05t0102800-02">
    <property type="protein sequence ID" value="Os05t0102800-02"/>
    <property type="gene ID" value="Os05g0102800"/>
</dbReference>
<dbReference type="Gramene" id="Os05t0102800-03">
    <property type="protein sequence ID" value="Os05t0102800-03"/>
    <property type="gene ID" value="Os05g0102800"/>
</dbReference>
<dbReference type="KEGG" id="dosa:Os05g0102800"/>
<dbReference type="eggNOG" id="KOG4660">
    <property type="taxonomic scope" value="Eukaryota"/>
</dbReference>
<dbReference type="InParanoid" id="Q75M35"/>
<dbReference type="OMA" id="DKWCRPM"/>
<dbReference type="OrthoDB" id="417481at2759"/>
<dbReference type="Proteomes" id="UP000000763">
    <property type="component" value="Chromosome 5"/>
</dbReference>
<dbReference type="Proteomes" id="UP000007752">
    <property type="component" value="Chromosome 5"/>
</dbReference>
<dbReference type="Proteomes" id="UP000059680">
    <property type="component" value="Chromosome 5"/>
</dbReference>
<dbReference type="ExpressionAtlas" id="Q75M35">
    <property type="expression patterns" value="baseline and differential"/>
</dbReference>
<dbReference type="GO" id="GO:0003723">
    <property type="term" value="F:RNA binding"/>
    <property type="evidence" value="ECO:0000318"/>
    <property type="project" value="GO_Central"/>
</dbReference>
<dbReference type="GO" id="GO:0045836">
    <property type="term" value="P:positive regulation of meiotic nuclear division"/>
    <property type="evidence" value="ECO:0000318"/>
    <property type="project" value="GO_Central"/>
</dbReference>
<dbReference type="CDD" id="cd12524">
    <property type="entry name" value="RRM1_MEI2_like"/>
    <property type="match status" value="1"/>
</dbReference>
<dbReference type="CDD" id="cd12276">
    <property type="entry name" value="RRM2_MEI2_EAR1_like"/>
    <property type="match status" value="1"/>
</dbReference>
<dbReference type="CDD" id="cd12531">
    <property type="entry name" value="RRM3_MEI2_like"/>
    <property type="match status" value="1"/>
</dbReference>
<dbReference type="FunFam" id="3.30.70.330:FF:000349">
    <property type="entry name" value="Protein MEI2-like 1"/>
    <property type="match status" value="1"/>
</dbReference>
<dbReference type="FunFam" id="3.30.70.330:FF:000453">
    <property type="entry name" value="Protein MEI2-like 1"/>
    <property type="match status" value="1"/>
</dbReference>
<dbReference type="Gene3D" id="3.30.70.330">
    <property type="match status" value="2"/>
</dbReference>
<dbReference type="InterPro" id="IPR034453">
    <property type="entry name" value="MEI2-like_RRM1"/>
</dbReference>
<dbReference type="InterPro" id="IPR034454">
    <property type="entry name" value="MEI2-like_RRM3"/>
</dbReference>
<dbReference type="InterPro" id="IPR007201">
    <property type="entry name" value="Mei2-like_Rrm_C"/>
</dbReference>
<dbReference type="InterPro" id="IPR012677">
    <property type="entry name" value="Nucleotide-bd_a/b_plait_sf"/>
</dbReference>
<dbReference type="InterPro" id="IPR035979">
    <property type="entry name" value="RBD_domain_sf"/>
</dbReference>
<dbReference type="InterPro" id="IPR000504">
    <property type="entry name" value="RRM_dom"/>
</dbReference>
<dbReference type="PANTHER" id="PTHR23189">
    <property type="entry name" value="RNA RECOGNITION MOTIF-CONTAINING"/>
    <property type="match status" value="1"/>
</dbReference>
<dbReference type="Pfam" id="PF00076">
    <property type="entry name" value="RRM_1"/>
    <property type="match status" value="2"/>
</dbReference>
<dbReference type="Pfam" id="PF04059">
    <property type="entry name" value="RRM_2"/>
    <property type="match status" value="1"/>
</dbReference>
<dbReference type="SMART" id="SM00360">
    <property type="entry name" value="RRM"/>
    <property type="match status" value="3"/>
</dbReference>
<dbReference type="SUPFAM" id="SSF54928">
    <property type="entry name" value="RNA-binding domain, RBD"/>
    <property type="match status" value="2"/>
</dbReference>
<dbReference type="PROSITE" id="PS50102">
    <property type="entry name" value="RRM"/>
    <property type="match status" value="2"/>
</dbReference>
<name>OML3_ORYSJ</name>
<protein>
    <recommendedName>
        <fullName>Protein MEI2-like 3</fullName>
        <shortName>OML3</shortName>
    </recommendedName>
    <alternativeName>
        <fullName>MEI2-like protein 3</fullName>
    </alternativeName>
</protein>